<feature type="chain" id="PRO_1000192369" description="ATP-dependent 6-phosphofructokinase">
    <location>
        <begin position="1"/>
        <end position="319"/>
    </location>
</feature>
<feature type="active site" description="Proton acceptor" evidence="1">
    <location>
        <position position="127"/>
    </location>
</feature>
<feature type="binding site" evidence="1">
    <location>
        <position position="11"/>
    </location>
    <ligand>
        <name>ATP</name>
        <dbReference type="ChEBI" id="CHEBI:30616"/>
    </ligand>
</feature>
<feature type="binding site" evidence="1">
    <location>
        <begin position="21"/>
        <end position="25"/>
    </location>
    <ligand>
        <name>ADP</name>
        <dbReference type="ChEBI" id="CHEBI:456216"/>
        <note>allosteric activator; ligand shared between dimeric partners</note>
    </ligand>
</feature>
<feature type="binding site" evidence="1">
    <location>
        <begin position="72"/>
        <end position="73"/>
    </location>
    <ligand>
        <name>ATP</name>
        <dbReference type="ChEBI" id="CHEBI:30616"/>
    </ligand>
</feature>
<feature type="binding site" evidence="1">
    <location>
        <begin position="102"/>
        <end position="105"/>
    </location>
    <ligand>
        <name>ATP</name>
        <dbReference type="ChEBI" id="CHEBI:30616"/>
    </ligand>
</feature>
<feature type="binding site" evidence="1">
    <location>
        <position position="103"/>
    </location>
    <ligand>
        <name>Mg(2+)</name>
        <dbReference type="ChEBI" id="CHEBI:18420"/>
        <note>catalytic</note>
    </ligand>
</feature>
<feature type="binding site" description="in other chain" evidence="1">
    <location>
        <begin position="125"/>
        <end position="127"/>
    </location>
    <ligand>
        <name>substrate</name>
        <note>ligand shared between dimeric partners</note>
    </ligand>
</feature>
<feature type="binding site" description="in other chain" evidence="1">
    <location>
        <position position="154"/>
    </location>
    <ligand>
        <name>ADP</name>
        <dbReference type="ChEBI" id="CHEBI:456216"/>
        <note>allosteric activator; ligand shared between dimeric partners</note>
    </ligand>
</feature>
<feature type="binding site" evidence="1">
    <location>
        <position position="162"/>
    </location>
    <ligand>
        <name>substrate</name>
        <note>ligand shared between dimeric partners</note>
    </ligand>
</feature>
<feature type="binding site" description="in other chain" evidence="1">
    <location>
        <begin position="169"/>
        <end position="171"/>
    </location>
    <ligand>
        <name>substrate</name>
        <note>ligand shared between dimeric partners</note>
    </ligand>
</feature>
<feature type="binding site" description="in other chain" evidence="1">
    <location>
        <begin position="185"/>
        <end position="187"/>
    </location>
    <ligand>
        <name>ADP</name>
        <dbReference type="ChEBI" id="CHEBI:456216"/>
        <note>allosteric activator; ligand shared between dimeric partners</note>
    </ligand>
</feature>
<feature type="binding site" description="in other chain" evidence="1">
    <location>
        <position position="211"/>
    </location>
    <ligand>
        <name>ADP</name>
        <dbReference type="ChEBI" id="CHEBI:456216"/>
        <note>allosteric activator; ligand shared between dimeric partners</note>
    </ligand>
</feature>
<feature type="binding site" description="in other chain" evidence="1">
    <location>
        <begin position="213"/>
        <end position="215"/>
    </location>
    <ligand>
        <name>ADP</name>
        <dbReference type="ChEBI" id="CHEBI:456216"/>
        <note>allosteric activator; ligand shared between dimeric partners</note>
    </ligand>
</feature>
<feature type="binding site" description="in other chain" evidence="1">
    <location>
        <position position="222"/>
    </location>
    <ligand>
        <name>substrate</name>
        <note>ligand shared between dimeric partners</note>
    </ligand>
</feature>
<feature type="binding site" evidence="1">
    <location>
        <position position="243"/>
    </location>
    <ligand>
        <name>substrate</name>
        <note>ligand shared between dimeric partners</note>
    </ligand>
</feature>
<feature type="binding site" description="in other chain" evidence="1">
    <location>
        <begin position="249"/>
        <end position="252"/>
    </location>
    <ligand>
        <name>substrate</name>
        <note>ligand shared between dimeric partners</note>
    </ligand>
</feature>
<comment type="function">
    <text evidence="1">Catalyzes the phosphorylation of D-fructose 6-phosphate to fructose 1,6-bisphosphate by ATP, the first committing step of glycolysis.</text>
</comment>
<comment type="catalytic activity">
    <reaction evidence="1">
        <text>beta-D-fructose 6-phosphate + ATP = beta-D-fructose 1,6-bisphosphate + ADP + H(+)</text>
        <dbReference type="Rhea" id="RHEA:16109"/>
        <dbReference type="ChEBI" id="CHEBI:15378"/>
        <dbReference type="ChEBI" id="CHEBI:30616"/>
        <dbReference type="ChEBI" id="CHEBI:32966"/>
        <dbReference type="ChEBI" id="CHEBI:57634"/>
        <dbReference type="ChEBI" id="CHEBI:456216"/>
        <dbReference type="EC" id="2.7.1.11"/>
    </reaction>
</comment>
<comment type="cofactor">
    <cofactor evidence="1">
        <name>Mg(2+)</name>
        <dbReference type="ChEBI" id="CHEBI:18420"/>
    </cofactor>
</comment>
<comment type="activity regulation">
    <text evidence="1">Allosterically activated by ADP and other diphosphonucleosides, and allosterically inhibited by phosphoenolpyruvate.</text>
</comment>
<comment type="pathway">
    <text evidence="1">Carbohydrate degradation; glycolysis; D-glyceraldehyde 3-phosphate and glycerone phosphate from D-glucose: step 3/4.</text>
</comment>
<comment type="subunit">
    <text evidence="1">Homotetramer.</text>
</comment>
<comment type="subcellular location">
    <subcellularLocation>
        <location evidence="1">Cytoplasm</location>
    </subcellularLocation>
</comment>
<comment type="similarity">
    <text evidence="1">Belongs to the phosphofructokinase type A (PFKA) family. ATP-dependent PFK group I subfamily. Prokaryotic clade 'B1' sub-subfamily.</text>
</comment>
<evidence type="ECO:0000255" key="1">
    <source>
        <dbReference type="HAMAP-Rule" id="MF_00339"/>
    </source>
</evidence>
<proteinExistence type="inferred from homology"/>
<keyword id="KW-0021">Allosteric enzyme</keyword>
<keyword id="KW-0067">ATP-binding</keyword>
<keyword id="KW-0963">Cytoplasm</keyword>
<keyword id="KW-0324">Glycolysis</keyword>
<keyword id="KW-0418">Kinase</keyword>
<keyword id="KW-0460">Magnesium</keyword>
<keyword id="KW-0479">Metal-binding</keyword>
<keyword id="KW-0547">Nucleotide-binding</keyword>
<keyword id="KW-0808">Transferase</keyword>
<gene>
    <name evidence="1" type="primary">pfkA</name>
    <name type="ordered locus">CLM_3835</name>
</gene>
<sequence length="319" mass="34203">MRTIAVLTSGGDAPGMNAAIRAVVRTGLEKGLKVMGIQRGYNGLINGEIFEMDTHSVSDIIQRGGTILRTARCEEFRTEQGREKAAKILKAFGIDGLVVIGGDGSFHGAQLLSKLGINTVGLPGTIDNDLAYTDYTIGFDTSINTVLDAINKLRDTSTSHERVSVVEVMGRNCGDIALYTGVAGGAESIIIPEKEYNADKLCKQILQGKLKGKMHNLVLLAEGVGGANELAKYIEEVTGIETRSTILGHIQRGGSPTCMDRILASRMAYKAVELLISGKSSRVVGIKNGKIIDMDIDEALAVERSFDQELYDIATILSK</sequence>
<name>PFKA_CLOBJ</name>
<dbReference type="EC" id="2.7.1.11" evidence="1"/>
<dbReference type="EMBL" id="CP001581">
    <property type="protein sequence ID" value="ACO86187.1"/>
    <property type="molecule type" value="Genomic_DNA"/>
</dbReference>
<dbReference type="RefSeq" id="WP_003357588.1">
    <property type="nucleotide sequence ID" value="NC_012563.1"/>
</dbReference>
<dbReference type="SMR" id="C1FM55"/>
<dbReference type="GeneID" id="5184682"/>
<dbReference type="KEGG" id="cby:CLM_3835"/>
<dbReference type="eggNOG" id="COG0205">
    <property type="taxonomic scope" value="Bacteria"/>
</dbReference>
<dbReference type="HOGENOM" id="CLU_020655_0_1_9"/>
<dbReference type="UniPathway" id="UPA00109">
    <property type="reaction ID" value="UER00182"/>
</dbReference>
<dbReference type="Proteomes" id="UP000001374">
    <property type="component" value="Chromosome"/>
</dbReference>
<dbReference type="GO" id="GO:0005945">
    <property type="term" value="C:6-phosphofructokinase complex"/>
    <property type="evidence" value="ECO:0007669"/>
    <property type="project" value="TreeGrafter"/>
</dbReference>
<dbReference type="GO" id="GO:0003872">
    <property type="term" value="F:6-phosphofructokinase activity"/>
    <property type="evidence" value="ECO:0007669"/>
    <property type="project" value="UniProtKB-UniRule"/>
</dbReference>
<dbReference type="GO" id="GO:0016208">
    <property type="term" value="F:AMP binding"/>
    <property type="evidence" value="ECO:0007669"/>
    <property type="project" value="TreeGrafter"/>
</dbReference>
<dbReference type="GO" id="GO:0005524">
    <property type="term" value="F:ATP binding"/>
    <property type="evidence" value="ECO:0007669"/>
    <property type="project" value="UniProtKB-KW"/>
</dbReference>
<dbReference type="GO" id="GO:0070095">
    <property type="term" value="F:fructose-6-phosphate binding"/>
    <property type="evidence" value="ECO:0007669"/>
    <property type="project" value="TreeGrafter"/>
</dbReference>
<dbReference type="GO" id="GO:0042802">
    <property type="term" value="F:identical protein binding"/>
    <property type="evidence" value="ECO:0007669"/>
    <property type="project" value="TreeGrafter"/>
</dbReference>
<dbReference type="GO" id="GO:0046872">
    <property type="term" value="F:metal ion binding"/>
    <property type="evidence" value="ECO:0007669"/>
    <property type="project" value="UniProtKB-KW"/>
</dbReference>
<dbReference type="GO" id="GO:0048029">
    <property type="term" value="F:monosaccharide binding"/>
    <property type="evidence" value="ECO:0007669"/>
    <property type="project" value="TreeGrafter"/>
</dbReference>
<dbReference type="GO" id="GO:0061621">
    <property type="term" value="P:canonical glycolysis"/>
    <property type="evidence" value="ECO:0007669"/>
    <property type="project" value="TreeGrafter"/>
</dbReference>
<dbReference type="GO" id="GO:0030388">
    <property type="term" value="P:fructose 1,6-bisphosphate metabolic process"/>
    <property type="evidence" value="ECO:0007669"/>
    <property type="project" value="TreeGrafter"/>
</dbReference>
<dbReference type="GO" id="GO:0006002">
    <property type="term" value="P:fructose 6-phosphate metabolic process"/>
    <property type="evidence" value="ECO:0007669"/>
    <property type="project" value="InterPro"/>
</dbReference>
<dbReference type="FunFam" id="3.40.50.450:FF:000001">
    <property type="entry name" value="ATP-dependent 6-phosphofructokinase"/>
    <property type="match status" value="1"/>
</dbReference>
<dbReference type="FunFam" id="3.40.50.460:FF:000002">
    <property type="entry name" value="ATP-dependent 6-phosphofructokinase"/>
    <property type="match status" value="1"/>
</dbReference>
<dbReference type="Gene3D" id="3.40.50.450">
    <property type="match status" value="1"/>
</dbReference>
<dbReference type="Gene3D" id="3.40.50.460">
    <property type="entry name" value="Phosphofructokinase domain"/>
    <property type="match status" value="1"/>
</dbReference>
<dbReference type="HAMAP" id="MF_00339">
    <property type="entry name" value="Phosphofructokinase_I_B1"/>
    <property type="match status" value="1"/>
</dbReference>
<dbReference type="InterPro" id="IPR022953">
    <property type="entry name" value="ATP_PFK"/>
</dbReference>
<dbReference type="InterPro" id="IPR012003">
    <property type="entry name" value="ATP_PFK_prok-type"/>
</dbReference>
<dbReference type="InterPro" id="IPR012828">
    <property type="entry name" value="PFKA_ATP_prok"/>
</dbReference>
<dbReference type="InterPro" id="IPR015912">
    <property type="entry name" value="Phosphofructokinase_CS"/>
</dbReference>
<dbReference type="InterPro" id="IPR000023">
    <property type="entry name" value="Phosphofructokinase_dom"/>
</dbReference>
<dbReference type="InterPro" id="IPR035966">
    <property type="entry name" value="PKF_sf"/>
</dbReference>
<dbReference type="NCBIfam" id="TIGR02482">
    <property type="entry name" value="PFKA_ATP"/>
    <property type="match status" value="1"/>
</dbReference>
<dbReference type="NCBIfam" id="NF002872">
    <property type="entry name" value="PRK03202.1"/>
    <property type="match status" value="1"/>
</dbReference>
<dbReference type="PANTHER" id="PTHR13697:SF4">
    <property type="entry name" value="ATP-DEPENDENT 6-PHOSPHOFRUCTOKINASE"/>
    <property type="match status" value="1"/>
</dbReference>
<dbReference type="PANTHER" id="PTHR13697">
    <property type="entry name" value="PHOSPHOFRUCTOKINASE"/>
    <property type="match status" value="1"/>
</dbReference>
<dbReference type="Pfam" id="PF00365">
    <property type="entry name" value="PFK"/>
    <property type="match status" value="1"/>
</dbReference>
<dbReference type="PIRSF" id="PIRSF000532">
    <property type="entry name" value="ATP_PFK_prok"/>
    <property type="match status" value="1"/>
</dbReference>
<dbReference type="PRINTS" id="PR00476">
    <property type="entry name" value="PHFRCTKINASE"/>
</dbReference>
<dbReference type="SUPFAM" id="SSF53784">
    <property type="entry name" value="Phosphofructokinase"/>
    <property type="match status" value="1"/>
</dbReference>
<dbReference type="PROSITE" id="PS00433">
    <property type="entry name" value="PHOSPHOFRUCTOKINASE"/>
    <property type="match status" value="1"/>
</dbReference>
<reference key="1">
    <citation type="submission" date="2008-10" db="EMBL/GenBank/DDBJ databases">
        <title>Genome sequence of Clostridium botulinum A2 Kyoto.</title>
        <authorList>
            <person name="Shrivastava S."/>
            <person name="Brinkac L.M."/>
            <person name="Brown J.L."/>
            <person name="Bruce D."/>
            <person name="Detter C.C."/>
            <person name="Johnson E.A."/>
            <person name="Munk C.A."/>
            <person name="Smith L.A."/>
            <person name="Smith T.J."/>
            <person name="Sutton G."/>
            <person name="Brettin T.S."/>
        </authorList>
    </citation>
    <scope>NUCLEOTIDE SEQUENCE [LARGE SCALE GENOMIC DNA]</scope>
    <source>
        <strain>Kyoto / Type A2</strain>
    </source>
</reference>
<organism>
    <name type="scientific">Clostridium botulinum (strain Kyoto / Type A2)</name>
    <dbReference type="NCBI Taxonomy" id="536232"/>
    <lineage>
        <taxon>Bacteria</taxon>
        <taxon>Bacillati</taxon>
        <taxon>Bacillota</taxon>
        <taxon>Clostridia</taxon>
        <taxon>Eubacteriales</taxon>
        <taxon>Clostridiaceae</taxon>
        <taxon>Clostridium</taxon>
    </lineage>
</organism>
<protein>
    <recommendedName>
        <fullName evidence="1">ATP-dependent 6-phosphofructokinase</fullName>
        <shortName evidence="1">ATP-PFK</shortName>
        <shortName evidence="1">Phosphofructokinase</shortName>
        <ecNumber evidence="1">2.7.1.11</ecNumber>
    </recommendedName>
    <alternativeName>
        <fullName evidence="1">Phosphohexokinase</fullName>
    </alternativeName>
</protein>
<accession>C1FM55</accession>